<proteinExistence type="inferred from homology"/>
<feature type="chain" id="PRO_0000384243" description="Maintenance of mitochondrial morphology protein 1">
    <location>
        <begin position="1"/>
        <end position="495"/>
    </location>
</feature>
<feature type="topological domain" description="Lumenal" evidence="1">
    <location>
        <begin position="1"/>
        <end position="22"/>
    </location>
</feature>
<feature type="transmembrane region" description="Helical" evidence="1">
    <location>
        <begin position="23"/>
        <end position="43"/>
    </location>
</feature>
<feature type="topological domain" description="Cytoplasmic" evidence="1">
    <location>
        <begin position="44"/>
        <end position="495"/>
    </location>
</feature>
<feature type="domain" description="SMP-LTD" evidence="1">
    <location>
        <begin position="128"/>
        <end position="379"/>
    </location>
</feature>
<feature type="region of interest" description="Disordered" evidence="2">
    <location>
        <begin position="63"/>
        <end position="94"/>
    </location>
</feature>
<feature type="region of interest" description="Disordered" evidence="2">
    <location>
        <begin position="269"/>
        <end position="320"/>
    </location>
</feature>
<feature type="region of interest" description="Disordered" evidence="2">
    <location>
        <begin position="382"/>
        <end position="428"/>
    </location>
</feature>
<feature type="region of interest" description="Disordered" evidence="2">
    <location>
        <begin position="440"/>
        <end position="495"/>
    </location>
</feature>
<feature type="compositionally biased region" description="Polar residues" evidence="2">
    <location>
        <begin position="65"/>
        <end position="74"/>
    </location>
</feature>
<feature type="compositionally biased region" description="Polar residues" evidence="2">
    <location>
        <begin position="82"/>
        <end position="94"/>
    </location>
</feature>
<feature type="compositionally biased region" description="Pro residues" evidence="2">
    <location>
        <begin position="271"/>
        <end position="289"/>
    </location>
</feature>
<feature type="compositionally biased region" description="Basic and acidic residues" evidence="2">
    <location>
        <begin position="418"/>
        <end position="428"/>
    </location>
</feature>
<feature type="compositionally biased region" description="Polar residues" evidence="2">
    <location>
        <begin position="458"/>
        <end position="469"/>
    </location>
</feature>
<keyword id="KW-0256">Endoplasmic reticulum</keyword>
<keyword id="KW-0445">Lipid transport</keyword>
<keyword id="KW-0446">Lipid-binding</keyword>
<keyword id="KW-0472">Membrane</keyword>
<keyword id="KW-1185">Reference proteome</keyword>
<keyword id="KW-0812">Transmembrane</keyword>
<keyword id="KW-1133">Transmembrane helix</keyword>
<keyword id="KW-0813">Transport</keyword>
<evidence type="ECO:0000255" key="1">
    <source>
        <dbReference type="HAMAP-Rule" id="MF_03103"/>
    </source>
</evidence>
<evidence type="ECO:0000256" key="2">
    <source>
        <dbReference type="SAM" id="MobiDB-lite"/>
    </source>
</evidence>
<sequence length="495" mass="53499">MALQQHEPAPFAPQSSLSFTQGFLLGQLSVVLLIGAFIKFFIFGEAPPPPSRGMSNRTTHRRYSSVYSPPQDSQKSLREKPSTSNVLRPVPSTSTNTRSILRKTYYSAIPTNPTSKHGRHRMHHSSHQPESLDWFNVLIAQTIAQYRETAYSLKDSPTSSILSSLTAAMNNPEKKPSFIDKIKVTDISLGEEFPIFSNCRIIAVDDPVSDGGRLQALLDVDLSDDNLSIAVETSMLLNYPKPRSAIIPIALSVSVVRFSGTLCISLIPASTEPPEPLQTPAGSPAPPTSDPRDNAGNRPPGPGEHTASQDELPPKSSPKSNVAFSFLPDYRLDLSVRSLIGSRSRLQDVPKIAQLVEARVHAWFEERVVEPRVQVVGLPDLWPRMGRTGVRPGEDSDAGSTAPPRSAGSTESSGPPRFSDDHGREPEGLRFRGALDSRLGLGAGSRTNSFNVDMGGLRSSSMTRQQSGGARSDHFEMPGAMPAGTPVGTPGIPDN</sequence>
<accession>B6HDM7</accession>
<gene>
    <name evidence="1" type="primary">mmm1</name>
    <name type="ORF">Pc20g12160</name>
</gene>
<protein>
    <recommendedName>
        <fullName evidence="1">Maintenance of mitochondrial morphology protein 1</fullName>
    </recommendedName>
</protein>
<reference key="1">
    <citation type="journal article" date="2008" name="Nat. Biotechnol.">
        <title>Genome sequencing and analysis of the filamentous fungus Penicillium chrysogenum.</title>
        <authorList>
            <person name="van den Berg M.A."/>
            <person name="Albang R."/>
            <person name="Albermann K."/>
            <person name="Badger J.H."/>
            <person name="Daran J.-M."/>
            <person name="Driessen A.J.M."/>
            <person name="Garcia-Estrada C."/>
            <person name="Fedorova N.D."/>
            <person name="Harris D.M."/>
            <person name="Heijne W.H.M."/>
            <person name="Joardar V.S."/>
            <person name="Kiel J.A.K.W."/>
            <person name="Kovalchuk A."/>
            <person name="Martin J.F."/>
            <person name="Nierman W.C."/>
            <person name="Nijland J.G."/>
            <person name="Pronk J.T."/>
            <person name="Roubos J.A."/>
            <person name="van der Klei I.J."/>
            <person name="van Peij N.N.M.E."/>
            <person name="Veenhuis M."/>
            <person name="von Doehren H."/>
            <person name="Wagner C."/>
            <person name="Wortman J.R."/>
            <person name="Bovenberg R.A.L."/>
        </authorList>
    </citation>
    <scope>NUCLEOTIDE SEQUENCE [LARGE SCALE GENOMIC DNA]</scope>
    <source>
        <strain>ATCC 28089 / DSM 1075 / NRRL 1951 / Wisconsin 54-1255</strain>
    </source>
</reference>
<dbReference type="EMBL" id="AM920435">
    <property type="protein sequence ID" value="CAP86545.1"/>
    <property type="molecule type" value="Genomic_DNA"/>
</dbReference>
<dbReference type="RefSeq" id="XP_002563701.1">
    <property type="nucleotide sequence ID" value="XM_002563655.1"/>
</dbReference>
<dbReference type="SMR" id="B6HDM7"/>
<dbReference type="STRING" id="500485.B6HDM7"/>
<dbReference type="VEuPathDB" id="FungiDB:PCH_Pc20g12160"/>
<dbReference type="eggNOG" id="ENOG502QUUW">
    <property type="taxonomic scope" value="Eukaryota"/>
</dbReference>
<dbReference type="HOGENOM" id="CLU_032730_1_0_1"/>
<dbReference type="OMA" id="WSFTQGL"/>
<dbReference type="OrthoDB" id="5376138at2759"/>
<dbReference type="BioCyc" id="PCHR:PC20G12160-MONOMER"/>
<dbReference type="Proteomes" id="UP000000724">
    <property type="component" value="Contig Pc00c20"/>
</dbReference>
<dbReference type="GO" id="GO:0005789">
    <property type="term" value="C:endoplasmic reticulum membrane"/>
    <property type="evidence" value="ECO:0007669"/>
    <property type="project" value="UniProtKB-SubCell"/>
</dbReference>
<dbReference type="GO" id="GO:0032865">
    <property type="term" value="C:ERMES complex"/>
    <property type="evidence" value="ECO:0007669"/>
    <property type="project" value="UniProtKB-UniRule"/>
</dbReference>
<dbReference type="GO" id="GO:0008289">
    <property type="term" value="F:lipid binding"/>
    <property type="evidence" value="ECO:0007669"/>
    <property type="project" value="UniProtKB-KW"/>
</dbReference>
<dbReference type="GO" id="GO:0000002">
    <property type="term" value="P:mitochondrial genome maintenance"/>
    <property type="evidence" value="ECO:0007669"/>
    <property type="project" value="UniProtKB-UniRule"/>
</dbReference>
<dbReference type="GO" id="GO:1990456">
    <property type="term" value="P:mitochondrion-endoplasmic reticulum membrane tethering"/>
    <property type="evidence" value="ECO:0007669"/>
    <property type="project" value="TreeGrafter"/>
</dbReference>
<dbReference type="GO" id="GO:0015914">
    <property type="term" value="P:phospholipid transport"/>
    <property type="evidence" value="ECO:0007669"/>
    <property type="project" value="TreeGrafter"/>
</dbReference>
<dbReference type="GO" id="GO:0045040">
    <property type="term" value="P:protein insertion into mitochondrial outer membrane"/>
    <property type="evidence" value="ECO:0007669"/>
    <property type="project" value="UniProtKB-UniRule"/>
</dbReference>
<dbReference type="CDD" id="cd21671">
    <property type="entry name" value="SMP_Mmm1"/>
    <property type="match status" value="1"/>
</dbReference>
<dbReference type="HAMAP" id="MF_03103">
    <property type="entry name" value="Mmm1"/>
    <property type="match status" value="1"/>
</dbReference>
<dbReference type="InterPro" id="IPR027537">
    <property type="entry name" value="Mmm1"/>
</dbReference>
<dbReference type="InterPro" id="IPR019411">
    <property type="entry name" value="MMM1_dom"/>
</dbReference>
<dbReference type="InterPro" id="IPR031468">
    <property type="entry name" value="SMP_LBD"/>
</dbReference>
<dbReference type="PANTHER" id="PTHR13466:SF0">
    <property type="entry name" value="SMP-LTD DOMAIN-CONTAINING PROTEIN"/>
    <property type="match status" value="1"/>
</dbReference>
<dbReference type="PANTHER" id="PTHR13466">
    <property type="entry name" value="TEX2 PROTEIN-RELATED"/>
    <property type="match status" value="1"/>
</dbReference>
<dbReference type="Pfam" id="PF10296">
    <property type="entry name" value="MMM1"/>
    <property type="match status" value="1"/>
</dbReference>
<dbReference type="PROSITE" id="PS51847">
    <property type="entry name" value="SMP"/>
    <property type="match status" value="1"/>
</dbReference>
<comment type="function">
    <text evidence="1">Component of the ERMES/MDM complex, which serves as a molecular tether to connect the endoplasmic reticulum (ER) and mitochondria. Components of this complex are involved in the control of mitochondrial shape and protein biogenesis, and function in nonvesicular lipid trafficking between the ER and mitochondria. The mdm12-mmm1 subcomplex functions in the major beta-barrel assembly pathway that is responsible for biogenesis of all outer membrane beta-barrel proteins, and acts in a late step after the SAM complex. The mdm10-mdm12-mmm1 subcomplex further acts in the TOM40-specific pathway after the action of the mdm12-mmm1 complex. Essential for establishing and maintaining the structure of mitochondria and maintenance of mtDNA nucleoids.</text>
</comment>
<comment type="subunit">
    <text evidence="1">Homodimer. Component of the ER-mitochondria encounter structure (ERMES) or MDM complex, composed of mmm1, mdm10, mdm12 and mdm34. A MMM1 homodimer associates with one molecule of mdm12 on each side in a pairwise head-to-tail manner, and the SMP-LTD domains of mmm1 and mdm12 generate a continuous hydrophobic tunnel for phospholipid trafficking.</text>
</comment>
<comment type="subcellular location">
    <subcellularLocation>
        <location evidence="1">Endoplasmic reticulum membrane</location>
        <topology evidence="1">Single-pass type I membrane protein</topology>
    </subcellularLocation>
    <text evidence="1">The ERMES/MDM complex localizes to a few discrete foci (around 10 per single cell), that represent mitochondria-endoplasmic reticulum junctions. These foci are often found next to mtDNA nucleoids.</text>
</comment>
<comment type="domain">
    <text evidence="1">The SMP-LTD domain is a barrel-like domain that can bind various types of glycerophospholipids in its interior and mediate their transfer between two adjacent bilayers.</text>
</comment>
<comment type="similarity">
    <text evidence="1">Belongs to the MMM1 family.</text>
</comment>
<organism>
    <name type="scientific">Penicillium rubens (strain ATCC 28089 / DSM 1075 / NRRL 1951 / Wisconsin 54-1255)</name>
    <name type="common">Penicillium chrysogenum</name>
    <dbReference type="NCBI Taxonomy" id="500485"/>
    <lineage>
        <taxon>Eukaryota</taxon>
        <taxon>Fungi</taxon>
        <taxon>Dikarya</taxon>
        <taxon>Ascomycota</taxon>
        <taxon>Pezizomycotina</taxon>
        <taxon>Eurotiomycetes</taxon>
        <taxon>Eurotiomycetidae</taxon>
        <taxon>Eurotiales</taxon>
        <taxon>Aspergillaceae</taxon>
        <taxon>Penicillium</taxon>
        <taxon>Penicillium chrysogenum species complex</taxon>
    </lineage>
</organism>
<name>MMM1_PENRW</name>